<name>DEC1_COCH4</name>
<feature type="chain" id="PRO_0000207110" description="Decarboxylase DEC1">
    <location>
        <begin position="1"/>
        <end position="253"/>
    </location>
</feature>
<feature type="active site" description="Schiff-base intermediate with acetoacetate" evidence="1">
    <location>
        <position position="121"/>
    </location>
</feature>
<protein>
    <recommendedName>
        <fullName evidence="6">Decarboxylase DEC1</fullName>
        <ecNumber evidence="2">4.1.1.-</ecNumber>
    </recommendedName>
    <alternativeName>
        <fullName evidence="7">T-toxin biosynthesis protein DEC1</fullName>
    </alternativeName>
</protein>
<proteinExistence type="inferred from homology"/>
<keyword id="KW-0210">Decarboxylase</keyword>
<keyword id="KW-0456">Lyase</keyword>
<keyword id="KW-0704">Schiff base</keyword>
<evidence type="ECO:0000250" key="1"/>
<evidence type="ECO:0000269" key="2">
    <source>
    </source>
</evidence>
<evidence type="ECO:0000269" key="3">
    <source>
    </source>
</evidence>
<evidence type="ECO:0000269" key="4">
    <source>
    </source>
</evidence>
<evidence type="ECO:0000269" key="5">
    <source>
    </source>
</evidence>
<evidence type="ECO:0000303" key="6">
    <source>
    </source>
</evidence>
<evidence type="ECO:0000305" key="7"/>
<dbReference type="EC" id="4.1.1.-" evidence="2"/>
<dbReference type="EMBL" id="AF525909">
    <property type="protein sequence ID" value="AAM88291.1"/>
    <property type="molecule type" value="Genomic_DNA"/>
</dbReference>
<dbReference type="EMBL" id="KB733525">
    <property type="protein sequence ID" value="ENH98583.1"/>
    <property type="molecule type" value="Genomic_DNA"/>
</dbReference>
<dbReference type="RefSeq" id="XP_014072493.1">
    <property type="nucleotide sequence ID" value="XM_014217018.1"/>
</dbReference>
<dbReference type="SMR" id="Q8NJQ3"/>
<dbReference type="GeneID" id="25839373"/>
<dbReference type="HOGENOM" id="CLU_098009_0_0_1"/>
<dbReference type="OrthoDB" id="10248817at2759"/>
<dbReference type="PHI-base" id="PHI:250"/>
<dbReference type="Proteomes" id="UP000012338">
    <property type="component" value="Unassembled WGS sequence"/>
</dbReference>
<dbReference type="GO" id="GO:0016831">
    <property type="term" value="F:carboxy-lyase activity"/>
    <property type="evidence" value="ECO:0007669"/>
    <property type="project" value="UniProtKB-KW"/>
</dbReference>
<dbReference type="Gene3D" id="2.40.400.10">
    <property type="entry name" value="Acetoacetate decarboxylase-like"/>
    <property type="match status" value="1"/>
</dbReference>
<dbReference type="InterPro" id="IPR010451">
    <property type="entry name" value="Acetoacetate_decarboxylase"/>
</dbReference>
<dbReference type="InterPro" id="IPR023375">
    <property type="entry name" value="ADC_dom_sf"/>
</dbReference>
<dbReference type="Pfam" id="PF06314">
    <property type="entry name" value="ADC"/>
    <property type="match status" value="1"/>
</dbReference>
<dbReference type="SUPFAM" id="SSF160104">
    <property type="entry name" value="Acetoacetate decarboxylase-like"/>
    <property type="match status" value="1"/>
</dbReference>
<sequence>MTITGQINSETLNNGVPIFAPPYRWSKHWPRFTDVNCITIRYRTDGSSIRQYIPDNLQIEETPIVTIMLLDFGFSVIGPYHELIHCVEVTYEGKKYNYSFLLILDNEEACIGGRELLGNPKVLGTIEFDRQNRPPTAFIHGRVLRPSNTVIADIHFKPLCLVLDAGESKTPITGLNLRLIPSLIPGAPPSVREYTNVDFTLQGGEVWEGVGSLNFPSNSEFEPLHKFPVLEYLSATYHRGAWVEQRLLNVYSF</sequence>
<gene>
    <name evidence="6" type="primary">DEC1</name>
    <name type="ORF">COCC4DRAFT_155400</name>
</gene>
<organism>
    <name type="scientific">Cochliobolus heterostrophus (strain C4 / ATCC 48331 / race T)</name>
    <name type="common">Southern corn leaf blight fungus</name>
    <name type="synonym">Bipolaris maydis</name>
    <dbReference type="NCBI Taxonomy" id="665024"/>
    <lineage>
        <taxon>Eukaryota</taxon>
        <taxon>Fungi</taxon>
        <taxon>Dikarya</taxon>
        <taxon>Ascomycota</taxon>
        <taxon>Pezizomycotina</taxon>
        <taxon>Dothideomycetes</taxon>
        <taxon>Pleosporomycetidae</taxon>
        <taxon>Pleosporales</taxon>
        <taxon>Pleosporineae</taxon>
        <taxon>Pleosporaceae</taxon>
        <taxon>Bipolaris</taxon>
    </lineage>
</organism>
<comment type="function">
    <text evidence="2 3 4 5">Decarboxylase; part of the Tox1B locus, one of the 2 loci that mediate the biosynthesis of T-toxin, a family of linear polyketides 37 to 45 carbons in length, of which the major component is 41 carbons, and which leads to high virulence to maize (PubMed:20192833, PubMed:8953776). One of the PKSs (PKS1 or PKS2) could synthesize a precursor, used subsequently by the other PKS as starter unit, to add additional carbons (PubMed:16529376). Variability in the length of the final carbon backbone C35-47 could be achieved by varying the number of condensation cycles, or use of different starter or extender units or might be due to decarboxylation of the penultimate product, catalyzed by DEC1 (PubMed:12236595). Additional proteins are required for the biosynthesis of T-toxin, including oxidoreductases RED1, RED2, RED3, LAM1 and OXI1, as well as esterase TOX9 (PubMed:20192833).</text>
</comment>
<comment type="pathway">
    <text evidence="2">Mycotoxin biosynthesis.</text>
</comment>
<comment type="disruption phenotype">
    <text evidence="2">Leads to the loss of T-Toxin production, resulting in low virulence for maize (PubMed:12236595).</text>
</comment>
<comment type="similarity">
    <text evidence="7">Belongs to the ADC family.</text>
</comment>
<reference key="1">
    <citation type="journal article" date="2002" name="Mol. Plant Microbe Interact.">
        <title>A decarboxylase encoded at the Cochliobolus heterostrophus translocation-associated Tox1B locus is required for polyketide (T-toxin) biosynthesis and high virulence on T-cytoplasm maize.</title>
        <authorList>
            <person name="Rose M.S."/>
            <person name="Yun S.-H."/>
            <person name="Asvarak T."/>
            <person name="Lu S.-W."/>
            <person name="Yoder O.C."/>
            <person name="Turgeon B.G."/>
        </authorList>
    </citation>
    <scope>NUCLEOTIDE SEQUENCE [GENOMIC DNA]</scope>
    <scope>FUNCTION</scope>
    <scope>DISRUPTION PHENOTYPE</scope>
    <source>
        <strain>C4 / ATCC 48331 / race T</strain>
    </source>
</reference>
<reference key="2">
    <citation type="journal article" date="2012" name="PLoS Pathog.">
        <title>Diverse lifestyles and strategies of plant pathogenesis encoded in the genomes of eighteen Dothideomycetes fungi.</title>
        <authorList>
            <person name="Ohm R.A."/>
            <person name="Feau N."/>
            <person name="Henrissat B."/>
            <person name="Schoch C.L."/>
            <person name="Horwitz B.A."/>
            <person name="Barry K.W."/>
            <person name="Condon B.J."/>
            <person name="Copeland A.C."/>
            <person name="Dhillon B."/>
            <person name="Glaser F."/>
            <person name="Hesse C.N."/>
            <person name="Kosti I."/>
            <person name="LaButti K."/>
            <person name="Lindquist E.A."/>
            <person name="Lucas S."/>
            <person name="Salamov A.A."/>
            <person name="Bradshaw R.E."/>
            <person name="Ciuffetti L."/>
            <person name="Hamelin R.C."/>
            <person name="Kema G.H.J."/>
            <person name="Lawrence C."/>
            <person name="Scott J.A."/>
            <person name="Spatafora J.W."/>
            <person name="Turgeon B.G."/>
            <person name="de Wit P.J.G.M."/>
            <person name="Zhong S."/>
            <person name="Goodwin S.B."/>
            <person name="Grigoriev I.V."/>
        </authorList>
    </citation>
    <scope>NUCLEOTIDE SEQUENCE [LARGE SCALE GENOMIC DNA]</scope>
    <source>
        <strain>C4 / ATCC 48331 / race T</strain>
    </source>
</reference>
<reference key="3">
    <citation type="journal article" date="2013" name="PLoS Genet.">
        <title>Comparative genome structure, secondary metabolite, and effector coding capacity across Cochliobolus pathogens.</title>
        <authorList>
            <person name="Condon B.J."/>
            <person name="Leng Y."/>
            <person name="Wu D."/>
            <person name="Bushley K.E."/>
            <person name="Ohm R.A."/>
            <person name="Otillar R."/>
            <person name="Martin J."/>
            <person name="Schackwitz W."/>
            <person name="Grimwood J."/>
            <person name="MohdZainudin N."/>
            <person name="Xue C."/>
            <person name="Wang R."/>
            <person name="Manning V.A."/>
            <person name="Dhillon B."/>
            <person name="Tu Z.J."/>
            <person name="Steffenson B.J."/>
            <person name="Salamov A."/>
            <person name="Sun H."/>
            <person name="Lowry S."/>
            <person name="LaButti K."/>
            <person name="Han J."/>
            <person name="Copeland A."/>
            <person name="Lindquist E."/>
            <person name="Barry K."/>
            <person name="Schmutz J."/>
            <person name="Baker S.E."/>
            <person name="Ciuffetti L.M."/>
            <person name="Grigoriev I.V."/>
            <person name="Zhong S."/>
            <person name="Turgeon B.G."/>
        </authorList>
    </citation>
    <scope>NUCLEOTIDE SEQUENCE [LARGE SCALE GENOMIC DNA]</scope>
    <source>
        <strain>C4 / ATCC 48331 / race T</strain>
    </source>
</reference>
<reference key="4">
    <citation type="journal article" date="1996" name="Plant Cell">
        <title>A polyketide synthase is required for fungal virulence and production of the polyketide T-toxin.</title>
        <authorList>
            <person name="Yang G."/>
            <person name="Rose M.S."/>
            <person name="Turgeon B.G."/>
            <person name="Yoder O.C."/>
        </authorList>
    </citation>
    <scope>FUNCTION</scope>
    <source>
        <strain>C4 / ATCC 48331 / race T</strain>
    </source>
</reference>
<reference key="5">
    <citation type="journal article" date="2006" name="Mol. Plant Microbe Interact.">
        <title>Two polyketide synthase-encoding genes are required for biosynthesis of the polyketide virulence factor, T-toxin, by Cochliobolus heterostrophus.</title>
        <authorList>
            <person name="Baker S.E."/>
            <person name="Kroken S."/>
            <person name="Inderbitzin P."/>
            <person name="Asvarak T."/>
            <person name="Li B.Y."/>
            <person name="Shi L."/>
            <person name="Yoder O.C."/>
            <person name="Turgeon B.G."/>
        </authorList>
    </citation>
    <scope>FUNCTION</scope>
</reference>
<reference key="6">
    <citation type="journal article" date="2010" name="Mol. Plant Microbe Interact.">
        <title>Six new genes required for production of T-toxin, a polyketide determinant of high virulence of Cochliobolus heterostrophus to maize.</title>
        <authorList>
            <person name="Inderbitzin P."/>
            <person name="Asvarak T."/>
            <person name="Turgeon B.G."/>
        </authorList>
    </citation>
    <scope>FUNCTION</scope>
    <source>
        <strain>C4 / ATCC 48331 / race T</strain>
    </source>
</reference>
<accession>Q8NJQ3</accession>
<accession>N4WEA6</accession>